<organism>
    <name type="scientific">Haemophilus influenzae (strain 86-028NP)</name>
    <dbReference type="NCBI Taxonomy" id="281310"/>
    <lineage>
        <taxon>Bacteria</taxon>
        <taxon>Pseudomonadati</taxon>
        <taxon>Pseudomonadota</taxon>
        <taxon>Gammaproteobacteria</taxon>
        <taxon>Pasteurellales</taxon>
        <taxon>Pasteurellaceae</taxon>
        <taxon>Haemophilus</taxon>
    </lineage>
</organism>
<keyword id="KW-0963">Cytoplasm</keyword>
<keyword id="KW-0342">GTP-binding</keyword>
<keyword id="KW-0396">Initiation factor</keyword>
<keyword id="KW-0547">Nucleotide-binding</keyword>
<keyword id="KW-0648">Protein biosynthesis</keyword>
<comment type="function">
    <text evidence="2">One of the essential components for the initiation of protein synthesis. Protects formylmethionyl-tRNA from spontaneous hydrolysis and promotes its binding to the 30S ribosomal subunits. Also involved in the hydrolysis of GTP during the formation of the 70S ribosomal complex.</text>
</comment>
<comment type="subcellular location">
    <subcellularLocation>
        <location evidence="2">Cytoplasm</location>
    </subcellularLocation>
</comment>
<comment type="similarity">
    <text evidence="2">Belongs to the TRAFAC class translation factor GTPase superfamily. Classic translation factor GTPase family. IF-2 subfamily.</text>
</comment>
<feature type="chain" id="PRO_0000228203" description="Translation initiation factor IF-2">
    <location>
        <begin position="1"/>
        <end position="844"/>
    </location>
</feature>
<feature type="domain" description="tr-type G">
    <location>
        <begin position="343"/>
        <end position="513"/>
    </location>
</feature>
<feature type="region of interest" description="Disordered" evidence="3">
    <location>
        <begin position="1"/>
        <end position="48"/>
    </location>
</feature>
<feature type="region of interest" description="Disordered" evidence="3">
    <location>
        <begin position="79"/>
        <end position="249"/>
    </location>
</feature>
<feature type="region of interest" description="G1" evidence="1">
    <location>
        <begin position="352"/>
        <end position="359"/>
    </location>
</feature>
<feature type="region of interest" description="G2" evidence="1">
    <location>
        <begin position="377"/>
        <end position="381"/>
    </location>
</feature>
<feature type="region of interest" description="G3" evidence="1">
    <location>
        <begin position="399"/>
        <end position="402"/>
    </location>
</feature>
<feature type="region of interest" description="G4" evidence="1">
    <location>
        <begin position="453"/>
        <end position="456"/>
    </location>
</feature>
<feature type="region of interest" description="G5" evidence="1">
    <location>
        <begin position="489"/>
        <end position="491"/>
    </location>
</feature>
<feature type="compositionally biased region" description="Basic and acidic residues" evidence="3">
    <location>
        <begin position="1"/>
        <end position="11"/>
    </location>
</feature>
<feature type="compositionally biased region" description="Low complexity" evidence="3">
    <location>
        <begin position="21"/>
        <end position="30"/>
    </location>
</feature>
<feature type="compositionally biased region" description="Basic and acidic residues" evidence="3">
    <location>
        <begin position="79"/>
        <end position="161"/>
    </location>
</feature>
<feature type="compositionally biased region" description="Acidic residues" evidence="3">
    <location>
        <begin position="162"/>
        <end position="175"/>
    </location>
</feature>
<feature type="compositionally biased region" description="Basic residues" evidence="3">
    <location>
        <begin position="200"/>
        <end position="210"/>
    </location>
</feature>
<feature type="compositionally biased region" description="Basic and acidic residues" evidence="3">
    <location>
        <begin position="211"/>
        <end position="237"/>
    </location>
</feature>
<feature type="binding site" evidence="2">
    <location>
        <begin position="352"/>
        <end position="359"/>
    </location>
    <ligand>
        <name>GTP</name>
        <dbReference type="ChEBI" id="CHEBI:37565"/>
    </ligand>
</feature>
<feature type="binding site" evidence="2">
    <location>
        <begin position="399"/>
        <end position="403"/>
    </location>
    <ligand>
        <name>GTP</name>
        <dbReference type="ChEBI" id="CHEBI:37565"/>
    </ligand>
</feature>
<feature type="binding site" evidence="2">
    <location>
        <begin position="453"/>
        <end position="456"/>
    </location>
    <ligand>
        <name>GTP</name>
        <dbReference type="ChEBI" id="CHEBI:37565"/>
    </ligand>
</feature>
<name>IF2_HAEI8</name>
<protein>
    <recommendedName>
        <fullName evidence="2">Translation initiation factor IF-2</fullName>
    </recommendedName>
</protein>
<dbReference type="EMBL" id="CP000057">
    <property type="protein sequence ID" value="AAX88610.1"/>
    <property type="molecule type" value="Genomic_DNA"/>
</dbReference>
<dbReference type="RefSeq" id="WP_011272663.1">
    <property type="nucleotide sequence ID" value="NC_007146.2"/>
</dbReference>
<dbReference type="SMR" id="Q4QK37"/>
<dbReference type="GeneID" id="93220551"/>
<dbReference type="KEGG" id="hit:NTHI1844"/>
<dbReference type="HOGENOM" id="CLU_006301_6_3_6"/>
<dbReference type="Proteomes" id="UP000002525">
    <property type="component" value="Chromosome"/>
</dbReference>
<dbReference type="GO" id="GO:0005829">
    <property type="term" value="C:cytosol"/>
    <property type="evidence" value="ECO:0007669"/>
    <property type="project" value="TreeGrafter"/>
</dbReference>
<dbReference type="GO" id="GO:0005525">
    <property type="term" value="F:GTP binding"/>
    <property type="evidence" value="ECO:0007669"/>
    <property type="project" value="UniProtKB-KW"/>
</dbReference>
<dbReference type="GO" id="GO:0003924">
    <property type="term" value="F:GTPase activity"/>
    <property type="evidence" value="ECO:0007669"/>
    <property type="project" value="UniProtKB-UniRule"/>
</dbReference>
<dbReference type="GO" id="GO:0097216">
    <property type="term" value="F:guanosine tetraphosphate binding"/>
    <property type="evidence" value="ECO:0007669"/>
    <property type="project" value="UniProtKB-ARBA"/>
</dbReference>
<dbReference type="GO" id="GO:0003743">
    <property type="term" value="F:translation initiation factor activity"/>
    <property type="evidence" value="ECO:0007669"/>
    <property type="project" value="UniProtKB-UniRule"/>
</dbReference>
<dbReference type="CDD" id="cd01887">
    <property type="entry name" value="IF2_eIF5B"/>
    <property type="match status" value="1"/>
</dbReference>
<dbReference type="CDD" id="cd03702">
    <property type="entry name" value="IF2_mtIF2_II"/>
    <property type="match status" value="1"/>
</dbReference>
<dbReference type="CDD" id="cd03692">
    <property type="entry name" value="mtIF2_IVc"/>
    <property type="match status" value="1"/>
</dbReference>
<dbReference type="FunFam" id="2.40.30.10:FF:000007">
    <property type="entry name" value="Translation initiation factor IF-2"/>
    <property type="match status" value="1"/>
</dbReference>
<dbReference type="FunFam" id="2.40.30.10:FF:000008">
    <property type="entry name" value="Translation initiation factor IF-2"/>
    <property type="match status" value="1"/>
</dbReference>
<dbReference type="FunFam" id="3.40.50.10050:FF:000001">
    <property type="entry name" value="Translation initiation factor IF-2"/>
    <property type="match status" value="1"/>
</dbReference>
<dbReference type="FunFam" id="3.40.50.300:FF:000019">
    <property type="entry name" value="Translation initiation factor IF-2"/>
    <property type="match status" value="1"/>
</dbReference>
<dbReference type="Gene3D" id="3.40.50.300">
    <property type="entry name" value="P-loop containing nucleotide triphosphate hydrolases"/>
    <property type="match status" value="1"/>
</dbReference>
<dbReference type="Gene3D" id="2.40.30.10">
    <property type="entry name" value="Translation factors"/>
    <property type="match status" value="2"/>
</dbReference>
<dbReference type="Gene3D" id="3.40.50.10050">
    <property type="entry name" value="Translation initiation factor IF- 2, domain 3"/>
    <property type="match status" value="1"/>
</dbReference>
<dbReference type="HAMAP" id="MF_00100_B">
    <property type="entry name" value="IF_2_B"/>
    <property type="match status" value="1"/>
</dbReference>
<dbReference type="InterPro" id="IPR053905">
    <property type="entry name" value="EF-G-like_DII"/>
</dbReference>
<dbReference type="InterPro" id="IPR004161">
    <property type="entry name" value="EFTu-like_2"/>
</dbReference>
<dbReference type="InterPro" id="IPR013575">
    <property type="entry name" value="IF2_assoc_dom_bac"/>
</dbReference>
<dbReference type="InterPro" id="IPR044145">
    <property type="entry name" value="IF2_II"/>
</dbReference>
<dbReference type="InterPro" id="IPR006847">
    <property type="entry name" value="IF2_N"/>
</dbReference>
<dbReference type="InterPro" id="IPR027417">
    <property type="entry name" value="P-loop_NTPase"/>
</dbReference>
<dbReference type="InterPro" id="IPR005225">
    <property type="entry name" value="Small_GTP-bd"/>
</dbReference>
<dbReference type="InterPro" id="IPR000795">
    <property type="entry name" value="T_Tr_GTP-bd_dom"/>
</dbReference>
<dbReference type="InterPro" id="IPR000178">
    <property type="entry name" value="TF_IF2_bacterial-like"/>
</dbReference>
<dbReference type="InterPro" id="IPR015760">
    <property type="entry name" value="TIF_IF2"/>
</dbReference>
<dbReference type="InterPro" id="IPR023115">
    <property type="entry name" value="TIF_IF2_dom3"/>
</dbReference>
<dbReference type="InterPro" id="IPR036925">
    <property type="entry name" value="TIF_IF2_dom3_sf"/>
</dbReference>
<dbReference type="InterPro" id="IPR009000">
    <property type="entry name" value="Transl_B-barrel_sf"/>
</dbReference>
<dbReference type="NCBIfam" id="TIGR00487">
    <property type="entry name" value="IF-2"/>
    <property type="match status" value="1"/>
</dbReference>
<dbReference type="NCBIfam" id="TIGR00231">
    <property type="entry name" value="small_GTP"/>
    <property type="match status" value="1"/>
</dbReference>
<dbReference type="PANTHER" id="PTHR43381:SF5">
    <property type="entry name" value="TR-TYPE G DOMAIN-CONTAINING PROTEIN"/>
    <property type="match status" value="1"/>
</dbReference>
<dbReference type="PANTHER" id="PTHR43381">
    <property type="entry name" value="TRANSLATION INITIATION FACTOR IF-2-RELATED"/>
    <property type="match status" value="1"/>
</dbReference>
<dbReference type="Pfam" id="PF22042">
    <property type="entry name" value="EF-G_D2"/>
    <property type="match status" value="1"/>
</dbReference>
<dbReference type="Pfam" id="PF00009">
    <property type="entry name" value="GTP_EFTU"/>
    <property type="match status" value="1"/>
</dbReference>
<dbReference type="Pfam" id="PF03144">
    <property type="entry name" value="GTP_EFTU_D2"/>
    <property type="match status" value="1"/>
</dbReference>
<dbReference type="Pfam" id="PF11987">
    <property type="entry name" value="IF-2"/>
    <property type="match status" value="1"/>
</dbReference>
<dbReference type="Pfam" id="PF08364">
    <property type="entry name" value="IF2_assoc"/>
    <property type="match status" value="1"/>
</dbReference>
<dbReference type="Pfam" id="PF04760">
    <property type="entry name" value="IF2_N"/>
    <property type="match status" value="1"/>
</dbReference>
<dbReference type="SUPFAM" id="SSF52156">
    <property type="entry name" value="Initiation factor IF2/eIF5b, domain 3"/>
    <property type="match status" value="1"/>
</dbReference>
<dbReference type="SUPFAM" id="SSF52540">
    <property type="entry name" value="P-loop containing nucleoside triphosphate hydrolases"/>
    <property type="match status" value="1"/>
</dbReference>
<dbReference type="SUPFAM" id="SSF50447">
    <property type="entry name" value="Translation proteins"/>
    <property type="match status" value="2"/>
</dbReference>
<dbReference type="PROSITE" id="PS51722">
    <property type="entry name" value="G_TR_2"/>
    <property type="match status" value="1"/>
</dbReference>
<dbReference type="PROSITE" id="PS01176">
    <property type="entry name" value="IF2"/>
    <property type="match status" value="1"/>
</dbReference>
<accession>Q4QK37</accession>
<gene>
    <name evidence="2" type="primary">infB</name>
    <name type="ordered locus">NTHI1844</name>
</gene>
<proteinExistence type="inferred from homology"/>
<sequence length="844" mass="92208">MTEDVKADAPKKLSIQRRTKTTVSSTTTGGKSKEVQVEVRKKRTVKTDIAQQEEAKLKAQQEAEAKKIAEQKAAEEKARLEAEKAATKKEADEKSKAEKAKAETAKPAKSAVDSKAKFVDPEKEKRKAEEAELRRKAEEVARQKAEEQARRAAEEAKRYAEADDSDNESSSEDYSDYNLSSRYALEAEDEEDRRNENRGRGKNKVAKAKKGGRDDENSKNSKNERESNRKNQKDAKFGKGKNGKKGTALQQAFTKPVQVVKADVVIGETITVAELANKMSVKATEIIKVMMKMGEMVTINQVIDQETAQLVAEELGHKVILRNENELEEAVLGDRDVNAEKVTRAPVVTIMGHVDHGKTSLLDYIRKAKVAAGEAGGITQHIGAYHVEMDDGKMITFLDTPGHAAFTSMRARGAKATDIVVLVVAADDGVMPQTIEAIQHAKAAGAPLVVAVNKIDKPEANPDRVEQELLQHDVISEKFGGDVQFVPVSAKKGTGVDDLLDAILLQSEVLELTAVKDGMASGVVIESYLDKGRGPVATILVQSGTLRKGDIVLCGFEYGRARAMRDENGKEVDEAGPSIPVELLGLSGVPAAGDEATVVRDEKKAREVALYRQGKFREVKLARQQKAKLENMFSNMSEGDVAELNVIVKADVQGSVEAIVQALNELSTNEVKVKVVGSGVGGITETDATLATASNAIIVGFNVRADATARRVIEAENIDLRYYSIIYELLNEIKAAMSGMLEPEFKQEIIGLAEVRDVFRHPKFGAIAGCMVTEGVVKRNNPIRVLRDNVVIFEGELESLRRFKDDVSEVRNGMECGIGVKNYNDVKVGDQIEVFEVVEVKRSI</sequence>
<reference key="1">
    <citation type="journal article" date="2005" name="J. Bacteriol.">
        <title>Genomic sequence of an otitis media isolate of nontypeable Haemophilus influenzae: comparative study with H. influenzae serotype d, strain KW20.</title>
        <authorList>
            <person name="Harrison A."/>
            <person name="Dyer D.W."/>
            <person name="Gillaspy A."/>
            <person name="Ray W.C."/>
            <person name="Mungur R."/>
            <person name="Carson M.B."/>
            <person name="Zhong H."/>
            <person name="Gipson J."/>
            <person name="Gipson M."/>
            <person name="Johnson L.S."/>
            <person name="Lewis L."/>
            <person name="Bakaletz L.O."/>
            <person name="Munson R.S. Jr."/>
        </authorList>
    </citation>
    <scope>NUCLEOTIDE SEQUENCE [LARGE SCALE GENOMIC DNA]</scope>
    <source>
        <strain>86-028NP</strain>
    </source>
</reference>
<evidence type="ECO:0000250" key="1"/>
<evidence type="ECO:0000255" key="2">
    <source>
        <dbReference type="HAMAP-Rule" id="MF_00100"/>
    </source>
</evidence>
<evidence type="ECO:0000256" key="3">
    <source>
        <dbReference type="SAM" id="MobiDB-lite"/>
    </source>
</evidence>